<name>MRAZ_NEIMF</name>
<protein>
    <recommendedName>
        <fullName>Transcriptional regulator MraZ</fullName>
    </recommendedName>
</protein>
<accession>A1KVM5</accession>
<keyword id="KW-0963">Cytoplasm</keyword>
<keyword id="KW-0238">DNA-binding</keyword>
<keyword id="KW-0677">Repeat</keyword>
<keyword id="KW-0804">Transcription</keyword>
<keyword id="KW-0805">Transcription regulation</keyword>
<proteinExistence type="inferred from homology"/>
<dbReference type="EMBL" id="AM421808">
    <property type="protein sequence ID" value="CAM10929.1"/>
    <property type="molecule type" value="Genomic_DNA"/>
</dbReference>
<dbReference type="RefSeq" id="WP_002218779.1">
    <property type="nucleotide sequence ID" value="NC_008767.1"/>
</dbReference>
<dbReference type="SMR" id="A1KVM5"/>
<dbReference type="KEGG" id="nmc:NMC1756"/>
<dbReference type="HOGENOM" id="CLU_107907_2_0_4"/>
<dbReference type="Proteomes" id="UP000002286">
    <property type="component" value="Chromosome"/>
</dbReference>
<dbReference type="GO" id="GO:0005737">
    <property type="term" value="C:cytoplasm"/>
    <property type="evidence" value="ECO:0007669"/>
    <property type="project" value="UniProtKB-UniRule"/>
</dbReference>
<dbReference type="GO" id="GO:0009295">
    <property type="term" value="C:nucleoid"/>
    <property type="evidence" value="ECO:0007669"/>
    <property type="project" value="UniProtKB-SubCell"/>
</dbReference>
<dbReference type="GO" id="GO:0003700">
    <property type="term" value="F:DNA-binding transcription factor activity"/>
    <property type="evidence" value="ECO:0007669"/>
    <property type="project" value="UniProtKB-UniRule"/>
</dbReference>
<dbReference type="GO" id="GO:0000976">
    <property type="term" value="F:transcription cis-regulatory region binding"/>
    <property type="evidence" value="ECO:0007669"/>
    <property type="project" value="TreeGrafter"/>
</dbReference>
<dbReference type="GO" id="GO:2000143">
    <property type="term" value="P:negative regulation of DNA-templated transcription initiation"/>
    <property type="evidence" value="ECO:0007669"/>
    <property type="project" value="TreeGrafter"/>
</dbReference>
<dbReference type="CDD" id="cd16321">
    <property type="entry name" value="MraZ_C"/>
    <property type="match status" value="1"/>
</dbReference>
<dbReference type="CDD" id="cd16320">
    <property type="entry name" value="MraZ_N"/>
    <property type="match status" value="1"/>
</dbReference>
<dbReference type="FunFam" id="3.40.1550.20:FF:000006">
    <property type="entry name" value="Transcriptional regulator MraZ"/>
    <property type="match status" value="1"/>
</dbReference>
<dbReference type="Gene3D" id="3.40.1550.20">
    <property type="entry name" value="Transcriptional regulator MraZ domain"/>
    <property type="match status" value="1"/>
</dbReference>
<dbReference type="HAMAP" id="MF_01008">
    <property type="entry name" value="MraZ"/>
    <property type="match status" value="1"/>
</dbReference>
<dbReference type="InterPro" id="IPR003444">
    <property type="entry name" value="MraZ"/>
</dbReference>
<dbReference type="InterPro" id="IPR035644">
    <property type="entry name" value="MraZ_C"/>
</dbReference>
<dbReference type="InterPro" id="IPR020603">
    <property type="entry name" value="MraZ_dom"/>
</dbReference>
<dbReference type="InterPro" id="IPR035642">
    <property type="entry name" value="MraZ_N"/>
</dbReference>
<dbReference type="InterPro" id="IPR038619">
    <property type="entry name" value="MraZ_sf"/>
</dbReference>
<dbReference type="InterPro" id="IPR007159">
    <property type="entry name" value="SpoVT-AbrB_dom"/>
</dbReference>
<dbReference type="InterPro" id="IPR037914">
    <property type="entry name" value="SpoVT-AbrB_sf"/>
</dbReference>
<dbReference type="NCBIfam" id="TIGR00242">
    <property type="entry name" value="division/cell wall cluster transcriptional repressor MraZ"/>
    <property type="match status" value="1"/>
</dbReference>
<dbReference type="PANTHER" id="PTHR34701">
    <property type="entry name" value="TRANSCRIPTIONAL REGULATOR MRAZ"/>
    <property type="match status" value="1"/>
</dbReference>
<dbReference type="PANTHER" id="PTHR34701:SF1">
    <property type="entry name" value="TRANSCRIPTIONAL REGULATOR MRAZ"/>
    <property type="match status" value="1"/>
</dbReference>
<dbReference type="Pfam" id="PF02381">
    <property type="entry name" value="MraZ"/>
    <property type="match status" value="2"/>
</dbReference>
<dbReference type="SUPFAM" id="SSF89447">
    <property type="entry name" value="AbrB/MazE/MraZ-like"/>
    <property type="match status" value="1"/>
</dbReference>
<dbReference type="PROSITE" id="PS51740">
    <property type="entry name" value="SPOVT_ABRB"/>
    <property type="match status" value="2"/>
</dbReference>
<comment type="subunit">
    <text evidence="1">Forms oligomers.</text>
</comment>
<comment type="subcellular location">
    <subcellularLocation>
        <location evidence="1">Cytoplasm</location>
        <location evidence="1">Nucleoid</location>
    </subcellularLocation>
</comment>
<comment type="similarity">
    <text evidence="1">Belongs to the MraZ family.</text>
</comment>
<evidence type="ECO:0000255" key="1">
    <source>
        <dbReference type="HAMAP-Rule" id="MF_01008"/>
    </source>
</evidence>
<evidence type="ECO:0000255" key="2">
    <source>
        <dbReference type="PROSITE-ProRule" id="PRU01076"/>
    </source>
</evidence>
<gene>
    <name evidence="1" type="primary">mraZ</name>
    <name type="ordered locus">NMC1756</name>
</gene>
<sequence>MFGGAHELSIDSKGRLAVPAKFRDILSRLYTPAVVVTLESKHKLLMYPVAEWEKVAAQLLNLKVADNPVLRRFQNLLLHNAEILEWDSAGRVLLPAGLRKRVDFDREVVLVGRANRLELWGREQWEAEMVQALDDDPDELAFQLGQTDLQL</sequence>
<reference key="1">
    <citation type="journal article" date="2007" name="PLoS Genet.">
        <title>Meningococcal genetic variation mechanisms viewed through comparative analysis of serogroup C strain FAM18.</title>
        <authorList>
            <person name="Bentley S.D."/>
            <person name="Vernikos G.S."/>
            <person name="Snyder L.A.S."/>
            <person name="Churcher C."/>
            <person name="Arrowsmith C."/>
            <person name="Chillingworth T."/>
            <person name="Cronin A."/>
            <person name="Davis P.H."/>
            <person name="Holroyd N.E."/>
            <person name="Jagels K."/>
            <person name="Maddison M."/>
            <person name="Moule S."/>
            <person name="Rabbinowitsch E."/>
            <person name="Sharp S."/>
            <person name="Unwin L."/>
            <person name="Whitehead S."/>
            <person name="Quail M.A."/>
            <person name="Achtman M."/>
            <person name="Barrell B.G."/>
            <person name="Saunders N.J."/>
            <person name="Parkhill J."/>
        </authorList>
    </citation>
    <scope>NUCLEOTIDE SEQUENCE [LARGE SCALE GENOMIC DNA]</scope>
    <source>
        <strain>ATCC 700532 / DSM 15464 / FAM18</strain>
    </source>
</reference>
<feature type="chain" id="PRO_1000062906" description="Transcriptional regulator MraZ">
    <location>
        <begin position="1"/>
        <end position="151"/>
    </location>
</feature>
<feature type="domain" description="SpoVT-AbrB 1" evidence="2">
    <location>
        <begin position="5"/>
        <end position="51"/>
    </location>
</feature>
<feature type="domain" description="SpoVT-AbrB 2" evidence="2">
    <location>
        <begin position="81"/>
        <end position="124"/>
    </location>
</feature>
<organism>
    <name type="scientific">Neisseria meningitidis serogroup C / serotype 2a (strain ATCC 700532 / DSM 15464 / FAM18)</name>
    <dbReference type="NCBI Taxonomy" id="272831"/>
    <lineage>
        <taxon>Bacteria</taxon>
        <taxon>Pseudomonadati</taxon>
        <taxon>Pseudomonadota</taxon>
        <taxon>Betaproteobacteria</taxon>
        <taxon>Neisseriales</taxon>
        <taxon>Neisseriaceae</taxon>
        <taxon>Neisseria</taxon>
    </lineage>
</organism>